<gene>
    <name evidence="1" type="primary">nrdR</name>
    <name type="ordered locus">NGR_c09580</name>
</gene>
<proteinExistence type="inferred from homology"/>
<reference key="1">
    <citation type="journal article" date="2009" name="Appl. Environ. Microbiol.">
        <title>Rhizobium sp. strain NGR234 possesses a remarkable number of secretion systems.</title>
        <authorList>
            <person name="Schmeisser C."/>
            <person name="Liesegang H."/>
            <person name="Krysciak D."/>
            <person name="Bakkou N."/>
            <person name="Le Quere A."/>
            <person name="Wollherr A."/>
            <person name="Heinemeyer I."/>
            <person name="Morgenstern B."/>
            <person name="Pommerening-Roeser A."/>
            <person name="Flores M."/>
            <person name="Palacios R."/>
            <person name="Brenner S."/>
            <person name="Gottschalk G."/>
            <person name="Schmitz R.A."/>
            <person name="Broughton W.J."/>
            <person name="Perret X."/>
            <person name="Strittmatter A.W."/>
            <person name="Streit W.R."/>
        </authorList>
    </citation>
    <scope>NUCLEOTIDE SEQUENCE [LARGE SCALE GENOMIC DNA]</scope>
    <source>
        <strain>NBRC 101917 / NGR234</strain>
    </source>
</reference>
<name>NRDR_SINFN</name>
<organism>
    <name type="scientific">Sinorhizobium fredii (strain NBRC 101917 / NGR234)</name>
    <dbReference type="NCBI Taxonomy" id="394"/>
    <lineage>
        <taxon>Bacteria</taxon>
        <taxon>Pseudomonadati</taxon>
        <taxon>Pseudomonadota</taxon>
        <taxon>Alphaproteobacteria</taxon>
        <taxon>Hyphomicrobiales</taxon>
        <taxon>Rhizobiaceae</taxon>
        <taxon>Sinorhizobium/Ensifer group</taxon>
        <taxon>Sinorhizobium</taxon>
    </lineage>
</organism>
<evidence type="ECO:0000255" key="1">
    <source>
        <dbReference type="HAMAP-Rule" id="MF_00440"/>
    </source>
</evidence>
<evidence type="ECO:0000256" key="2">
    <source>
        <dbReference type="SAM" id="MobiDB-lite"/>
    </source>
</evidence>
<accession>C3M9I2</accession>
<dbReference type="EMBL" id="CP001389">
    <property type="protein sequence ID" value="ACP24748.1"/>
    <property type="molecule type" value="Genomic_DNA"/>
</dbReference>
<dbReference type="RefSeq" id="WP_012707532.1">
    <property type="nucleotide sequence ID" value="NC_012587.1"/>
</dbReference>
<dbReference type="RefSeq" id="YP_002825501.1">
    <property type="nucleotide sequence ID" value="NC_012587.1"/>
</dbReference>
<dbReference type="SMR" id="C3M9I2"/>
<dbReference type="STRING" id="394.NGR_c09580"/>
<dbReference type="KEGG" id="rhi:NGR_c09580"/>
<dbReference type="PATRIC" id="fig|394.7.peg.3779"/>
<dbReference type="eggNOG" id="COG1327">
    <property type="taxonomic scope" value="Bacteria"/>
</dbReference>
<dbReference type="HOGENOM" id="CLU_108412_0_1_5"/>
<dbReference type="OrthoDB" id="9807461at2"/>
<dbReference type="Proteomes" id="UP000001054">
    <property type="component" value="Chromosome"/>
</dbReference>
<dbReference type="GO" id="GO:0005524">
    <property type="term" value="F:ATP binding"/>
    <property type="evidence" value="ECO:0007669"/>
    <property type="project" value="UniProtKB-KW"/>
</dbReference>
<dbReference type="GO" id="GO:0003677">
    <property type="term" value="F:DNA binding"/>
    <property type="evidence" value="ECO:0007669"/>
    <property type="project" value="UniProtKB-KW"/>
</dbReference>
<dbReference type="GO" id="GO:0008270">
    <property type="term" value="F:zinc ion binding"/>
    <property type="evidence" value="ECO:0007669"/>
    <property type="project" value="UniProtKB-UniRule"/>
</dbReference>
<dbReference type="GO" id="GO:0045892">
    <property type="term" value="P:negative regulation of DNA-templated transcription"/>
    <property type="evidence" value="ECO:0007669"/>
    <property type="project" value="UniProtKB-UniRule"/>
</dbReference>
<dbReference type="HAMAP" id="MF_00440">
    <property type="entry name" value="NrdR"/>
    <property type="match status" value="1"/>
</dbReference>
<dbReference type="InterPro" id="IPR005144">
    <property type="entry name" value="ATP-cone_dom"/>
</dbReference>
<dbReference type="InterPro" id="IPR055173">
    <property type="entry name" value="NrdR-like_N"/>
</dbReference>
<dbReference type="InterPro" id="IPR003796">
    <property type="entry name" value="RNR_NrdR-like"/>
</dbReference>
<dbReference type="NCBIfam" id="TIGR00244">
    <property type="entry name" value="transcriptional regulator NrdR"/>
    <property type="match status" value="1"/>
</dbReference>
<dbReference type="PANTHER" id="PTHR30455">
    <property type="entry name" value="TRANSCRIPTIONAL REPRESSOR NRDR"/>
    <property type="match status" value="1"/>
</dbReference>
<dbReference type="PANTHER" id="PTHR30455:SF2">
    <property type="entry name" value="TRANSCRIPTIONAL REPRESSOR NRDR"/>
    <property type="match status" value="1"/>
</dbReference>
<dbReference type="Pfam" id="PF03477">
    <property type="entry name" value="ATP-cone"/>
    <property type="match status" value="1"/>
</dbReference>
<dbReference type="Pfam" id="PF22811">
    <property type="entry name" value="Zn_ribbon_NrdR"/>
    <property type="match status" value="1"/>
</dbReference>
<dbReference type="PROSITE" id="PS51161">
    <property type="entry name" value="ATP_CONE"/>
    <property type="match status" value="1"/>
</dbReference>
<protein>
    <recommendedName>
        <fullName evidence="1">Transcriptional repressor NrdR</fullName>
    </recommendedName>
</protein>
<feature type="chain" id="PRO_1000191809" description="Transcriptional repressor NrdR">
    <location>
        <begin position="1"/>
        <end position="157"/>
    </location>
</feature>
<feature type="domain" description="ATP-cone" evidence="1">
    <location>
        <begin position="49"/>
        <end position="139"/>
    </location>
</feature>
<feature type="zinc finger region" evidence="1">
    <location>
        <begin position="3"/>
        <end position="34"/>
    </location>
</feature>
<feature type="region of interest" description="Disordered" evidence="2">
    <location>
        <begin position="1"/>
        <end position="21"/>
    </location>
</feature>
<feature type="compositionally biased region" description="Basic and acidic residues" evidence="2">
    <location>
        <begin position="11"/>
        <end position="21"/>
    </location>
</feature>
<keyword id="KW-0067">ATP-binding</keyword>
<keyword id="KW-0238">DNA-binding</keyword>
<keyword id="KW-0479">Metal-binding</keyword>
<keyword id="KW-0547">Nucleotide-binding</keyword>
<keyword id="KW-1185">Reference proteome</keyword>
<keyword id="KW-0678">Repressor</keyword>
<keyword id="KW-0804">Transcription</keyword>
<keyword id="KW-0805">Transcription regulation</keyword>
<keyword id="KW-0862">Zinc</keyword>
<keyword id="KW-0863">Zinc-finger</keyword>
<comment type="function">
    <text evidence="1">Negatively regulates transcription of bacterial ribonucleotide reductase nrd genes and operons by binding to NrdR-boxes.</text>
</comment>
<comment type="cofactor">
    <cofactor evidence="1">
        <name>Zn(2+)</name>
        <dbReference type="ChEBI" id="CHEBI:29105"/>
    </cofactor>
    <text evidence="1">Binds 1 zinc ion.</text>
</comment>
<comment type="similarity">
    <text evidence="1">Belongs to the NrdR family.</text>
</comment>
<sequence>MRCPYCSSEDSQVKDSRPAEDGNAIRRRRICPDCGGRFTTFERVQLRELMIIKKTGRKVPFDRDKLLRSFEIALRKRPVDRDRIERAVSGIVRRLESSGETEIPSEEIGLQVLEALKSLDDVAFVRYASVYRDFSHAEDFEKVIAEISAKIARDPSE</sequence>